<proteinExistence type="inferred from homology"/>
<accession>B7M821</accession>
<sequence length="430" mass="48414">MLDPNLLRNEPDAVAEKLARRGFKLDVDKLGALEERRKVLQVKTENLQAERNSRSKSIGQAKARGEDIEPLRLEVNKLGEELDAAKAELDALQAEIRDIALTIPNLPADEVPVGKDENDNVEVSRWGTPREFDFEVRDHVTLGEMHSGLDFAAAVKLTGSRFVVMKGQIARMHRALSQFMLDLHTEQHGYSENYVPYLVNQDTLYGTGQLPKFAGDLFHTRPLEEEADTSNYALIPTAEVPLTNLVRGEIIDEDDLPIKMTAHTPCFRSEAGSYGRDTRGLIRMHQFDKVEMVQIVRPEDSMAALEEMTGHAEKVLQLLGLPYRKIILCTGDMGFGACKTYDLEVWIPAQNTYREISSCSNVWDFQARRMQARCRSKSDKKTRLVHTLNGSGLAVGRTLVAVMENYQQADGRIEVPEVLRPYMNGLEYIG</sequence>
<keyword id="KW-0030">Aminoacyl-tRNA synthetase</keyword>
<keyword id="KW-0067">ATP-binding</keyword>
<keyword id="KW-0963">Cytoplasm</keyword>
<keyword id="KW-0436">Ligase</keyword>
<keyword id="KW-0547">Nucleotide-binding</keyword>
<keyword id="KW-0648">Protein biosynthesis</keyword>
<protein>
    <recommendedName>
        <fullName evidence="1">Serine--tRNA ligase</fullName>
        <ecNumber evidence="1">6.1.1.11</ecNumber>
    </recommendedName>
    <alternativeName>
        <fullName evidence="1">Seryl-tRNA synthetase</fullName>
        <shortName evidence="1">SerRS</shortName>
    </alternativeName>
    <alternativeName>
        <fullName evidence="1">Seryl-tRNA(Ser/Sec) synthetase</fullName>
    </alternativeName>
</protein>
<reference key="1">
    <citation type="journal article" date="2009" name="PLoS Genet.">
        <title>Organised genome dynamics in the Escherichia coli species results in highly diverse adaptive paths.</title>
        <authorList>
            <person name="Touchon M."/>
            <person name="Hoede C."/>
            <person name="Tenaillon O."/>
            <person name="Barbe V."/>
            <person name="Baeriswyl S."/>
            <person name="Bidet P."/>
            <person name="Bingen E."/>
            <person name="Bonacorsi S."/>
            <person name="Bouchier C."/>
            <person name="Bouvet O."/>
            <person name="Calteau A."/>
            <person name="Chiapello H."/>
            <person name="Clermont O."/>
            <person name="Cruveiller S."/>
            <person name="Danchin A."/>
            <person name="Diard M."/>
            <person name="Dossat C."/>
            <person name="Karoui M.E."/>
            <person name="Frapy E."/>
            <person name="Garry L."/>
            <person name="Ghigo J.M."/>
            <person name="Gilles A.M."/>
            <person name="Johnson J."/>
            <person name="Le Bouguenec C."/>
            <person name="Lescat M."/>
            <person name="Mangenot S."/>
            <person name="Martinez-Jehanne V."/>
            <person name="Matic I."/>
            <person name="Nassif X."/>
            <person name="Oztas S."/>
            <person name="Petit M.A."/>
            <person name="Pichon C."/>
            <person name="Rouy Z."/>
            <person name="Ruf C.S."/>
            <person name="Schneider D."/>
            <person name="Tourret J."/>
            <person name="Vacherie B."/>
            <person name="Vallenet D."/>
            <person name="Medigue C."/>
            <person name="Rocha E.P.C."/>
            <person name="Denamur E."/>
        </authorList>
    </citation>
    <scope>NUCLEOTIDE SEQUENCE [LARGE SCALE GENOMIC DNA]</scope>
    <source>
        <strain>IAI1</strain>
    </source>
</reference>
<comment type="function">
    <text evidence="1">Catalyzes the attachment of serine to tRNA(Ser). Is also able to aminoacylate tRNA(Sec) with serine, to form the misacylated tRNA L-seryl-tRNA(Sec), which will be further converted into selenocysteinyl-tRNA(Sec).</text>
</comment>
<comment type="catalytic activity">
    <reaction evidence="1">
        <text>tRNA(Ser) + L-serine + ATP = L-seryl-tRNA(Ser) + AMP + diphosphate + H(+)</text>
        <dbReference type="Rhea" id="RHEA:12292"/>
        <dbReference type="Rhea" id="RHEA-COMP:9669"/>
        <dbReference type="Rhea" id="RHEA-COMP:9703"/>
        <dbReference type="ChEBI" id="CHEBI:15378"/>
        <dbReference type="ChEBI" id="CHEBI:30616"/>
        <dbReference type="ChEBI" id="CHEBI:33019"/>
        <dbReference type="ChEBI" id="CHEBI:33384"/>
        <dbReference type="ChEBI" id="CHEBI:78442"/>
        <dbReference type="ChEBI" id="CHEBI:78533"/>
        <dbReference type="ChEBI" id="CHEBI:456215"/>
        <dbReference type="EC" id="6.1.1.11"/>
    </reaction>
</comment>
<comment type="catalytic activity">
    <reaction evidence="1">
        <text>tRNA(Sec) + L-serine + ATP = L-seryl-tRNA(Sec) + AMP + diphosphate + H(+)</text>
        <dbReference type="Rhea" id="RHEA:42580"/>
        <dbReference type="Rhea" id="RHEA-COMP:9742"/>
        <dbReference type="Rhea" id="RHEA-COMP:10128"/>
        <dbReference type="ChEBI" id="CHEBI:15378"/>
        <dbReference type="ChEBI" id="CHEBI:30616"/>
        <dbReference type="ChEBI" id="CHEBI:33019"/>
        <dbReference type="ChEBI" id="CHEBI:33384"/>
        <dbReference type="ChEBI" id="CHEBI:78442"/>
        <dbReference type="ChEBI" id="CHEBI:78533"/>
        <dbReference type="ChEBI" id="CHEBI:456215"/>
        <dbReference type="EC" id="6.1.1.11"/>
    </reaction>
</comment>
<comment type="pathway">
    <text evidence="1">Aminoacyl-tRNA biosynthesis; selenocysteinyl-tRNA(Sec) biosynthesis; L-seryl-tRNA(Sec) from L-serine and tRNA(Sec): step 1/1.</text>
</comment>
<comment type="subunit">
    <text evidence="1">Homodimer. The tRNA molecule binds across the dimer.</text>
</comment>
<comment type="subcellular location">
    <subcellularLocation>
        <location evidence="1">Cytoplasm</location>
    </subcellularLocation>
</comment>
<comment type="domain">
    <text evidence="1">Consists of two distinct domains, a catalytic core and a N-terminal extension that is involved in tRNA binding.</text>
</comment>
<comment type="similarity">
    <text evidence="1">Belongs to the class-II aminoacyl-tRNA synthetase family. Type-1 seryl-tRNA synthetase subfamily.</text>
</comment>
<evidence type="ECO:0000255" key="1">
    <source>
        <dbReference type="HAMAP-Rule" id="MF_00176"/>
    </source>
</evidence>
<feature type="chain" id="PRO_1000199482" description="Serine--tRNA ligase">
    <location>
        <begin position="1"/>
        <end position="430"/>
    </location>
</feature>
<feature type="binding site" evidence="1">
    <location>
        <begin position="237"/>
        <end position="239"/>
    </location>
    <ligand>
        <name>L-serine</name>
        <dbReference type="ChEBI" id="CHEBI:33384"/>
    </ligand>
</feature>
<feature type="binding site" evidence="1">
    <location>
        <begin position="268"/>
        <end position="270"/>
    </location>
    <ligand>
        <name>ATP</name>
        <dbReference type="ChEBI" id="CHEBI:30616"/>
    </ligand>
</feature>
<feature type="binding site" evidence="1">
    <location>
        <position position="291"/>
    </location>
    <ligand>
        <name>L-serine</name>
        <dbReference type="ChEBI" id="CHEBI:33384"/>
    </ligand>
</feature>
<feature type="binding site" evidence="1">
    <location>
        <begin position="355"/>
        <end position="358"/>
    </location>
    <ligand>
        <name>ATP</name>
        <dbReference type="ChEBI" id="CHEBI:30616"/>
    </ligand>
</feature>
<feature type="binding site" evidence="1">
    <location>
        <position position="391"/>
    </location>
    <ligand>
        <name>L-serine</name>
        <dbReference type="ChEBI" id="CHEBI:33384"/>
    </ligand>
</feature>
<dbReference type="EC" id="6.1.1.11" evidence="1"/>
<dbReference type="EMBL" id="CU928160">
    <property type="protein sequence ID" value="CAQ97797.1"/>
    <property type="molecule type" value="Genomic_DNA"/>
</dbReference>
<dbReference type="RefSeq" id="WP_000886683.1">
    <property type="nucleotide sequence ID" value="NC_011741.1"/>
</dbReference>
<dbReference type="SMR" id="B7M821"/>
<dbReference type="GeneID" id="93776527"/>
<dbReference type="KEGG" id="ecr:ECIAI1_0933"/>
<dbReference type="HOGENOM" id="CLU_023797_1_1_6"/>
<dbReference type="UniPathway" id="UPA00906">
    <property type="reaction ID" value="UER00895"/>
</dbReference>
<dbReference type="GO" id="GO:0005737">
    <property type="term" value="C:cytoplasm"/>
    <property type="evidence" value="ECO:0007669"/>
    <property type="project" value="UniProtKB-SubCell"/>
</dbReference>
<dbReference type="GO" id="GO:0005524">
    <property type="term" value="F:ATP binding"/>
    <property type="evidence" value="ECO:0007669"/>
    <property type="project" value="UniProtKB-UniRule"/>
</dbReference>
<dbReference type="GO" id="GO:0004828">
    <property type="term" value="F:serine-tRNA ligase activity"/>
    <property type="evidence" value="ECO:0007669"/>
    <property type="project" value="UniProtKB-UniRule"/>
</dbReference>
<dbReference type="GO" id="GO:0016260">
    <property type="term" value="P:selenocysteine biosynthetic process"/>
    <property type="evidence" value="ECO:0007669"/>
    <property type="project" value="UniProtKB-UniRule"/>
</dbReference>
<dbReference type="GO" id="GO:0006434">
    <property type="term" value="P:seryl-tRNA aminoacylation"/>
    <property type="evidence" value="ECO:0007669"/>
    <property type="project" value="UniProtKB-UniRule"/>
</dbReference>
<dbReference type="CDD" id="cd00770">
    <property type="entry name" value="SerRS_core"/>
    <property type="match status" value="1"/>
</dbReference>
<dbReference type="FunFam" id="1.10.287.40:FF:000001">
    <property type="entry name" value="Serine--tRNA ligase"/>
    <property type="match status" value="1"/>
</dbReference>
<dbReference type="FunFam" id="3.30.930.10:FF:000018">
    <property type="entry name" value="Serine--tRNA ligase"/>
    <property type="match status" value="1"/>
</dbReference>
<dbReference type="Gene3D" id="3.30.930.10">
    <property type="entry name" value="Bira Bifunctional Protein, Domain 2"/>
    <property type="match status" value="1"/>
</dbReference>
<dbReference type="Gene3D" id="1.10.287.40">
    <property type="entry name" value="Serine-tRNA synthetase, tRNA binding domain"/>
    <property type="match status" value="1"/>
</dbReference>
<dbReference type="HAMAP" id="MF_00176">
    <property type="entry name" value="Ser_tRNA_synth_type1"/>
    <property type="match status" value="1"/>
</dbReference>
<dbReference type="InterPro" id="IPR002314">
    <property type="entry name" value="aa-tRNA-synt_IIb"/>
</dbReference>
<dbReference type="InterPro" id="IPR006195">
    <property type="entry name" value="aa-tRNA-synth_II"/>
</dbReference>
<dbReference type="InterPro" id="IPR045864">
    <property type="entry name" value="aa-tRNA-synth_II/BPL/LPL"/>
</dbReference>
<dbReference type="InterPro" id="IPR002317">
    <property type="entry name" value="Ser-tRNA-ligase_type_1"/>
</dbReference>
<dbReference type="InterPro" id="IPR015866">
    <property type="entry name" value="Ser-tRNA-synth_1_N"/>
</dbReference>
<dbReference type="InterPro" id="IPR042103">
    <property type="entry name" value="SerRS_1_N_sf"/>
</dbReference>
<dbReference type="InterPro" id="IPR033729">
    <property type="entry name" value="SerRS_core"/>
</dbReference>
<dbReference type="InterPro" id="IPR010978">
    <property type="entry name" value="tRNA-bd_arm"/>
</dbReference>
<dbReference type="NCBIfam" id="TIGR00414">
    <property type="entry name" value="serS"/>
    <property type="match status" value="1"/>
</dbReference>
<dbReference type="PANTHER" id="PTHR43697:SF1">
    <property type="entry name" value="SERINE--TRNA LIGASE"/>
    <property type="match status" value="1"/>
</dbReference>
<dbReference type="PANTHER" id="PTHR43697">
    <property type="entry name" value="SERYL-TRNA SYNTHETASE"/>
    <property type="match status" value="1"/>
</dbReference>
<dbReference type="Pfam" id="PF02403">
    <property type="entry name" value="Seryl_tRNA_N"/>
    <property type="match status" value="1"/>
</dbReference>
<dbReference type="Pfam" id="PF00587">
    <property type="entry name" value="tRNA-synt_2b"/>
    <property type="match status" value="1"/>
</dbReference>
<dbReference type="PIRSF" id="PIRSF001529">
    <property type="entry name" value="Ser-tRNA-synth_IIa"/>
    <property type="match status" value="1"/>
</dbReference>
<dbReference type="PRINTS" id="PR00981">
    <property type="entry name" value="TRNASYNTHSER"/>
</dbReference>
<dbReference type="SUPFAM" id="SSF55681">
    <property type="entry name" value="Class II aaRS and biotin synthetases"/>
    <property type="match status" value="1"/>
</dbReference>
<dbReference type="SUPFAM" id="SSF46589">
    <property type="entry name" value="tRNA-binding arm"/>
    <property type="match status" value="1"/>
</dbReference>
<dbReference type="PROSITE" id="PS50862">
    <property type="entry name" value="AA_TRNA_LIGASE_II"/>
    <property type="match status" value="1"/>
</dbReference>
<organism>
    <name type="scientific">Escherichia coli O8 (strain IAI1)</name>
    <dbReference type="NCBI Taxonomy" id="585034"/>
    <lineage>
        <taxon>Bacteria</taxon>
        <taxon>Pseudomonadati</taxon>
        <taxon>Pseudomonadota</taxon>
        <taxon>Gammaproteobacteria</taxon>
        <taxon>Enterobacterales</taxon>
        <taxon>Enterobacteriaceae</taxon>
        <taxon>Escherichia</taxon>
    </lineage>
</organism>
<name>SYS_ECO8A</name>
<gene>
    <name evidence="1" type="primary">serS</name>
    <name type="ordered locus">ECIAI1_0933</name>
</gene>